<dbReference type="EMBL" id="AE004091">
    <property type="protein sequence ID" value="AAG05344.1"/>
    <property type="molecule type" value="Genomic_DNA"/>
</dbReference>
<dbReference type="PIR" id="C83401">
    <property type="entry name" value="C83401"/>
</dbReference>
<dbReference type="RefSeq" id="NP_250646.1">
    <property type="nucleotide sequence ID" value="NC_002516.2"/>
</dbReference>
<dbReference type="RefSeq" id="WP_003113478.1">
    <property type="nucleotide sequence ID" value="NC_002516.2"/>
</dbReference>
<dbReference type="STRING" id="208964.PA1956"/>
<dbReference type="PaxDb" id="208964-PA1956"/>
<dbReference type="DNASU" id="880791"/>
<dbReference type="GeneID" id="880791"/>
<dbReference type="KEGG" id="pae:PA1956"/>
<dbReference type="PATRIC" id="fig|208964.12.peg.2038"/>
<dbReference type="PseudoCAP" id="PA1956"/>
<dbReference type="HOGENOM" id="CLU_146708_0_0_6"/>
<dbReference type="InParanoid" id="Q9I2E8"/>
<dbReference type="OrthoDB" id="7024471at2"/>
<dbReference type="BioCyc" id="PAER208964:G1FZ6-1994-MONOMER"/>
<dbReference type="Proteomes" id="UP000002438">
    <property type="component" value="Chromosome"/>
</dbReference>
<dbReference type="GO" id="GO:0042597">
    <property type="term" value="C:periplasmic space"/>
    <property type="evidence" value="ECO:0007669"/>
    <property type="project" value="UniProtKB-SubCell"/>
</dbReference>
<dbReference type="GO" id="GO:1990000">
    <property type="term" value="P:amyloid fibril formation"/>
    <property type="evidence" value="ECO:0000315"/>
    <property type="project" value="PseudoCAP"/>
</dbReference>
<sequence>MSGSSLRIVVPALLVIVGSVPVSLPAHAADGTIVVQRQVQPRVAYRPSMVPDPHPTVVDTNVSAEVNALANGAASGNTVSRELGDADFAIVTSGSGIRSMILTGSALPGFASQPANPATVQAVGNLGTTHGAGGGAGAGLAGQINGSLKQGLAPLQMLGGGQ</sequence>
<comment type="function">
    <text evidence="1 3">An intrinsically disordered chaperone for fibril amyloid FapC that guards against fibrillation within the periplasm (By similarity). Upon overexpression of the endogenous six-gene locus (fapA-fapF), cells form large clumps during liquid growth, make large amounts of biofilm and produce amyloid fibrils.</text>
</comment>
<comment type="subunit">
    <text evidence="1">Monomer in solution. Interacts with FapC but not FapB in vitro.</text>
</comment>
<comment type="subcellular location">
    <subcellularLocation>
        <location evidence="6">Periplasm</location>
    </subcellularLocation>
</comment>
<comment type="induction">
    <text evidence="3">Constitutively transcribed with a peak during mid-exponential phase; maximum transcripts are seen under 37 degrees Celsius and at 200-500 mM NaCl. The first gene in the probable fapA-fapF operon.</text>
</comment>
<comment type="disruption phenotype">
    <text evidence="3">Both a single fapA deletion and deletion of the entire fapA-fapF six-gene locus show no visible growth phenotype and no change in biofilm formation.</text>
</comment>
<comment type="similarity">
    <text evidence="5">Belongs to the FapA family.</text>
</comment>
<reference evidence="7" key="1">
    <citation type="journal article" date="2000" name="Nature">
        <title>Complete genome sequence of Pseudomonas aeruginosa PAO1, an opportunistic pathogen.</title>
        <authorList>
            <person name="Stover C.K."/>
            <person name="Pham X.-Q.T."/>
            <person name="Erwin A.L."/>
            <person name="Mizoguchi S.D."/>
            <person name="Warrener P."/>
            <person name="Hickey M.J."/>
            <person name="Brinkman F.S.L."/>
            <person name="Hufnagle W.O."/>
            <person name="Kowalik D.J."/>
            <person name="Lagrou M."/>
            <person name="Garber R.L."/>
            <person name="Goltry L."/>
            <person name="Tolentino E."/>
            <person name="Westbrock-Wadman S."/>
            <person name="Yuan Y."/>
            <person name="Brody L.L."/>
            <person name="Coulter S.N."/>
            <person name="Folger K.R."/>
            <person name="Kas A."/>
            <person name="Larbig K."/>
            <person name="Lim R.M."/>
            <person name="Smith K.A."/>
            <person name="Spencer D.H."/>
            <person name="Wong G.K.-S."/>
            <person name="Wu Z."/>
            <person name="Paulsen I.T."/>
            <person name="Reizer J."/>
            <person name="Saier M.H. Jr."/>
            <person name="Hancock R.E.W."/>
            <person name="Lory S."/>
            <person name="Olson M.V."/>
        </authorList>
    </citation>
    <scope>NUCLEOTIDE SEQUENCE [LARGE SCALE GENOMIC DNA]</scope>
    <source>
        <strain>ATCC 15692 / DSM 22644 / CIP 104116 / JCM 14847 / LMG 12228 / 1C / PRS 101 / PAO1</strain>
    </source>
</reference>
<reference key="2">
    <citation type="journal article" date="2013" name="MicrobiologyOpen">
        <title>Expression of Fap amyloids in Pseudomonas aeruginosa, P. fluorescens, and P. putida results in aggregation and increased biofilm formation.</title>
        <authorList>
            <person name="Dueholm M.S."/>
            <person name="Soendergaard M.T."/>
            <person name="Nilsson M."/>
            <person name="Christiansen G."/>
            <person name="Stensballe A."/>
            <person name="Overgaard M.T."/>
            <person name="Givskov M."/>
            <person name="Tolker-Nielsen T."/>
            <person name="Otzen D.E."/>
            <person name="Nielsen P.H."/>
        </authorList>
    </citation>
    <scope>FUNCTION</scope>
    <scope>POSSIBLE SUBCELLULAR LOCATION</scope>
    <scope>INDUCTION</scope>
    <scope>DISRUPTION PHENOTYPE</scope>
    <source>
        <strain>ATCC 15692 / DSM 22644 / CIP 104116 / JCM 14847 / LMG 12228 / 1C / PRS 101 / PAO1</strain>
    </source>
</reference>
<organism>
    <name type="scientific">Pseudomonas aeruginosa (strain ATCC 15692 / DSM 22644 / CIP 104116 / JCM 14847 / LMG 12228 / 1C / PRS 101 / PAO1)</name>
    <dbReference type="NCBI Taxonomy" id="208964"/>
    <lineage>
        <taxon>Bacteria</taxon>
        <taxon>Pseudomonadati</taxon>
        <taxon>Pseudomonadota</taxon>
        <taxon>Gammaproteobacteria</taxon>
        <taxon>Pseudomonadales</taxon>
        <taxon>Pseudomonadaceae</taxon>
        <taxon>Pseudomonas</taxon>
    </lineage>
</organism>
<accession>Q9I2E8</accession>
<protein>
    <recommendedName>
        <fullName>Functional amyloid chaperone FapA</fullName>
    </recommendedName>
    <alternativeName>
        <fullName evidence="5">Fibril amyloid chaperone protein FapA</fullName>
    </alternativeName>
</protein>
<gene>
    <name evidence="4" type="primary">fapA</name>
    <name evidence="7" type="ordered locus">PA1956</name>
</gene>
<evidence type="ECO:0000250" key="1">
    <source>
        <dbReference type="UniProtKB" id="P0DXF3"/>
    </source>
</evidence>
<evidence type="ECO:0000255" key="2"/>
<evidence type="ECO:0000269" key="3">
    <source>
    </source>
</evidence>
<evidence type="ECO:0000303" key="4">
    <source>
    </source>
</evidence>
<evidence type="ECO:0000305" key="5"/>
<evidence type="ECO:0000305" key="6">
    <source>
    </source>
</evidence>
<evidence type="ECO:0000312" key="7">
    <source>
        <dbReference type="EMBL" id="AAG05344.1"/>
    </source>
</evidence>
<proteinExistence type="evidence at transcript level"/>
<name>FAPA_PSEAE</name>
<feature type="signal peptide" evidence="2">
    <location>
        <begin position="1"/>
        <end position="28"/>
    </location>
</feature>
<feature type="chain" id="PRO_5004328445" description="Functional amyloid chaperone FapA" evidence="2">
    <location>
        <begin position="29"/>
        <end position="162"/>
    </location>
</feature>
<keyword id="KW-0143">Chaperone</keyword>
<keyword id="KW-0574">Periplasm</keyword>
<keyword id="KW-1185">Reference proteome</keyword>
<keyword id="KW-0732">Signal</keyword>